<accession>C0HM23</accession>
<keyword id="KW-0044">Antibiotic</keyword>
<keyword id="KW-0929">Antimicrobial</keyword>
<keyword id="KW-0903">Direct protein sequencing</keyword>
<keyword id="KW-1015">Disulfide bond</keyword>
<keyword id="KW-0295">Fungicide</keyword>
<keyword id="KW-0611">Plant defense</keyword>
<keyword id="KW-0964">Secreted</keyword>
<feature type="chain" id="PRO_0000458657" description="Defensin D4">
    <location>
        <begin position="1"/>
        <end position="50"/>
    </location>
</feature>
<feature type="disulfide bond" evidence="1">
    <location>
        <begin position="3"/>
        <end position="50"/>
    </location>
</feature>
<feature type="disulfide bond" evidence="1">
    <location>
        <begin position="14"/>
        <end position="35"/>
    </location>
</feature>
<feature type="disulfide bond" evidence="1">
    <location>
        <begin position="20"/>
        <end position="44"/>
    </location>
</feature>
<feature type="disulfide bond" evidence="1">
    <location>
        <begin position="24"/>
        <end position="46"/>
    </location>
</feature>
<comment type="function">
    <text evidence="2">Antimicrobial peptide with antifungal activity.</text>
</comment>
<comment type="subcellular location">
    <subcellularLocation>
        <location evidence="1">Secreted</location>
    </subcellularLocation>
</comment>
<comment type="tissue specificity">
    <text evidence="2">Detected in seeds (at protein level).</text>
</comment>
<comment type="mass spectrometry" mass="5697.1" method="MALDI" evidence="2"/>
<comment type="similarity">
    <text evidence="4">Belongs to the DEFL family.</text>
</comment>
<organism>
    <name type="scientific">Nigella sativa</name>
    <name type="common">Black cumin</name>
    <dbReference type="NCBI Taxonomy" id="555479"/>
    <lineage>
        <taxon>Eukaryota</taxon>
        <taxon>Viridiplantae</taxon>
        <taxon>Streptophyta</taxon>
        <taxon>Embryophyta</taxon>
        <taxon>Tracheophyta</taxon>
        <taxon>Spermatophyta</taxon>
        <taxon>Magnoliopsida</taxon>
        <taxon>Ranunculales</taxon>
        <taxon>Ranunculaceae</taxon>
        <taxon>Ranunculoideae</taxon>
        <taxon>Nigelleae</taxon>
        <taxon>Nigella</taxon>
    </lineage>
</organism>
<proteinExistence type="evidence at protein level"/>
<dbReference type="SMR" id="C0HM23"/>
<dbReference type="GO" id="GO:0005576">
    <property type="term" value="C:extracellular region"/>
    <property type="evidence" value="ECO:0007669"/>
    <property type="project" value="UniProtKB-SubCell"/>
</dbReference>
<dbReference type="GO" id="GO:0042742">
    <property type="term" value="P:defense response to bacterium"/>
    <property type="evidence" value="ECO:0007669"/>
    <property type="project" value="UniProtKB-KW"/>
</dbReference>
<dbReference type="GO" id="GO:0050832">
    <property type="term" value="P:defense response to fungus"/>
    <property type="evidence" value="ECO:0007669"/>
    <property type="project" value="UniProtKB-KW"/>
</dbReference>
<dbReference type="GO" id="GO:0031640">
    <property type="term" value="P:killing of cells of another organism"/>
    <property type="evidence" value="ECO:0007669"/>
    <property type="project" value="UniProtKB-KW"/>
</dbReference>
<dbReference type="FunFam" id="3.30.30.10:FF:000003">
    <property type="entry name" value="Defensin-like protein 1"/>
    <property type="match status" value="1"/>
</dbReference>
<dbReference type="Gene3D" id="3.30.30.10">
    <property type="entry name" value="Knottin, scorpion toxin-like"/>
    <property type="match status" value="1"/>
</dbReference>
<dbReference type="InterPro" id="IPR008176">
    <property type="entry name" value="Defensin_plant"/>
</dbReference>
<dbReference type="InterPro" id="IPR003614">
    <property type="entry name" value="Scorpion_toxin-like"/>
</dbReference>
<dbReference type="InterPro" id="IPR036574">
    <property type="entry name" value="Scorpion_toxin-like_sf"/>
</dbReference>
<dbReference type="Pfam" id="PF00304">
    <property type="entry name" value="Gamma-thionin"/>
    <property type="match status" value="1"/>
</dbReference>
<dbReference type="SMART" id="SM00505">
    <property type="entry name" value="Knot1"/>
    <property type="match status" value="1"/>
</dbReference>
<dbReference type="SUPFAM" id="SSF57095">
    <property type="entry name" value="Scorpion toxin-like"/>
    <property type="match status" value="1"/>
</dbReference>
<sequence length="50" mass="5705">KFCERPSGTWAGVCGNNGKCKDQCIRLEKAKHGSCKYKFPAHRCVCYYEC</sequence>
<protein>
    <recommendedName>
        <fullName evidence="3">Defensin D4</fullName>
        <shortName evidence="3">Ns-D4</shortName>
    </recommendedName>
</protein>
<evidence type="ECO:0000250" key="1">
    <source>
        <dbReference type="UniProtKB" id="P69241"/>
    </source>
</evidence>
<evidence type="ECO:0000269" key="2">
    <source>
    </source>
</evidence>
<evidence type="ECO:0000303" key="3">
    <source>
    </source>
</evidence>
<evidence type="ECO:0000305" key="4"/>
<name>DEF4_NIGSA</name>
<reference evidence="4" key="1">
    <citation type="journal article" date="2023" name="Int. J. Mol. Sci.">
        <title>Diversity of Cationic Antimicrobial Peptides in Black Cumin (Nigella sativa L.) Seeds.</title>
        <authorList>
            <person name="Barashkova A.S."/>
            <person name="Smirnov A.N."/>
            <person name="Zorina E.S."/>
            <person name="Rogozhin E.A."/>
        </authorList>
    </citation>
    <scope>PROTEIN SEQUENCE</scope>
    <scope>FUNCTION</scope>
    <scope>MASS SPECTROMETRY</scope>
</reference>